<feature type="chain" id="PRO_1000089581" description="LexA repressor">
    <location>
        <begin position="1"/>
        <end position="244"/>
    </location>
</feature>
<feature type="DNA-binding region" description="H-T-H motif" evidence="1">
    <location>
        <begin position="58"/>
        <end position="78"/>
    </location>
</feature>
<feature type="region of interest" description="Disordered" evidence="2">
    <location>
        <begin position="1"/>
        <end position="24"/>
    </location>
</feature>
<feature type="compositionally biased region" description="Low complexity" evidence="2">
    <location>
        <begin position="10"/>
        <end position="24"/>
    </location>
</feature>
<feature type="active site" description="For autocatalytic cleavage activity" evidence="1">
    <location>
        <position position="168"/>
    </location>
</feature>
<feature type="active site" description="For autocatalytic cleavage activity" evidence="1">
    <location>
        <position position="205"/>
    </location>
</feature>
<feature type="site" description="Cleavage; by autolysis" evidence="1">
    <location>
        <begin position="133"/>
        <end position="134"/>
    </location>
</feature>
<protein>
    <recommendedName>
        <fullName evidence="1">LexA repressor</fullName>
        <ecNumber evidence="1">3.4.21.88</ecNumber>
    </recommendedName>
</protein>
<reference key="1">
    <citation type="journal article" date="2008" name="Genome Res.">
        <title>Insights from the complete genome sequence of Mycobacterium marinum on the evolution of Mycobacterium tuberculosis.</title>
        <authorList>
            <person name="Stinear T.P."/>
            <person name="Seemann T."/>
            <person name="Harrison P.F."/>
            <person name="Jenkin G.A."/>
            <person name="Davies J.K."/>
            <person name="Johnson P.D."/>
            <person name="Abdellah Z."/>
            <person name="Arrowsmith C."/>
            <person name="Chillingworth T."/>
            <person name="Churcher C."/>
            <person name="Clarke K."/>
            <person name="Cronin A."/>
            <person name="Davis P."/>
            <person name="Goodhead I."/>
            <person name="Holroyd N."/>
            <person name="Jagels K."/>
            <person name="Lord A."/>
            <person name="Moule S."/>
            <person name="Mungall K."/>
            <person name="Norbertczak H."/>
            <person name="Quail M.A."/>
            <person name="Rabbinowitsch E."/>
            <person name="Walker D."/>
            <person name="White B."/>
            <person name="Whitehead S."/>
            <person name="Small P.L."/>
            <person name="Brosch R."/>
            <person name="Ramakrishnan L."/>
            <person name="Fischbach M.A."/>
            <person name="Parkhill J."/>
            <person name="Cole S.T."/>
        </authorList>
    </citation>
    <scope>NUCLEOTIDE SEQUENCE [LARGE SCALE GENOMIC DNA]</scope>
    <source>
        <strain>ATCC BAA-535 / M</strain>
    </source>
</reference>
<comment type="function">
    <text evidence="1">Represses a number of genes involved in the response to DNA damage (SOS response), including recA and lexA. In the presence of single-stranded DNA, RecA interacts with LexA causing an autocatalytic cleavage which disrupts the DNA-binding part of LexA, leading to derepression of the SOS regulon and eventually DNA repair.</text>
</comment>
<comment type="catalytic activity">
    <reaction evidence="1">
        <text>Hydrolysis of Ala-|-Gly bond in repressor LexA.</text>
        <dbReference type="EC" id="3.4.21.88"/>
    </reaction>
</comment>
<comment type="subunit">
    <text evidence="1">Homodimer.</text>
</comment>
<comment type="similarity">
    <text evidence="1">Belongs to the peptidase S24 family.</text>
</comment>
<evidence type="ECO:0000255" key="1">
    <source>
        <dbReference type="HAMAP-Rule" id="MF_00015"/>
    </source>
</evidence>
<evidence type="ECO:0000256" key="2">
    <source>
        <dbReference type="SAM" id="MobiDB-lite"/>
    </source>
</evidence>
<accession>B2HLX8</accession>
<sequence>MSDSSDTTVDGASDGASDGASGADNRAQLVDTALTERQRTILNVIRTSVNDRGYPPSIREIGDAVGLTSTSSVAHQLRTLERKGYLRRDPNRPRAVDVRGADDTVTAAPVTDVAGSDALPEPTFVPVLGRIAAGGPILAEEAVEDVFPLPRELVGQGTLFLLKVVGESMIEAAICDGDWVVVRQQNVADNGDIVAAMIDGEATVKTFKRAGGQIWLMPHNPAFDPIPGNDATVLGKVVTVIRKI</sequence>
<proteinExistence type="inferred from homology"/>
<name>LEXA_MYCMM</name>
<keyword id="KW-0068">Autocatalytic cleavage</keyword>
<keyword id="KW-0227">DNA damage</keyword>
<keyword id="KW-0234">DNA repair</keyword>
<keyword id="KW-0235">DNA replication</keyword>
<keyword id="KW-0238">DNA-binding</keyword>
<keyword id="KW-0378">Hydrolase</keyword>
<keyword id="KW-1185">Reference proteome</keyword>
<keyword id="KW-0678">Repressor</keyword>
<keyword id="KW-0742">SOS response</keyword>
<keyword id="KW-0804">Transcription</keyword>
<keyword id="KW-0805">Transcription regulation</keyword>
<organism>
    <name type="scientific">Mycobacterium marinum (strain ATCC BAA-535 / M)</name>
    <dbReference type="NCBI Taxonomy" id="216594"/>
    <lineage>
        <taxon>Bacteria</taxon>
        <taxon>Bacillati</taxon>
        <taxon>Actinomycetota</taxon>
        <taxon>Actinomycetes</taxon>
        <taxon>Mycobacteriales</taxon>
        <taxon>Mycobacteriaceae</taxon>
        <taxon>Mycobacterium</taxon>
        <taxon>Mycobacterium ulcerans group</taxon>
    </lineage>
</organism>
<gene>
    <name evidence="1" type="primary">lexA</name>
    <name type="ordered locus">MMAR_1992</name>
</gene>
<dbReference type="EC" id="3.4.21.88" evidence="1"/>
<dbReference type="EMBL" id="CP000854">
    <property type="protein sequence ID" value="ACC40442.1"/>
    <property type="molecule type" value="Genomic_DNA"/>
</dbReference>
<dbReference type="RefSeq" id="WP_012393777.1">
    <property type="nucleotide sequence ID" value="NC_010612.1"/>
</dbReference>
<dbReference type="SMR" id="B2HLX8"/>
<dbReference type="STRING" id="216594.MMAR_1992"/>
<dbReference type="MEROPS" id="S24.001"/>
<dbReference type="KEGG" id="mmi:MMAR_1992"/>
<dbReference type="eggNOG" id="COG1974">
    <property type="taxonomic scope" value="Bacteria"/>
</dbReference>
<dbReference type="HOGENOM" id="CLU_066192_45_0_11"/>
<dbReference type="OrthoDB" id="9802364at2"/>
<dbReference type="Proteomes" id="UP000001190">
    <property type="component" value="Chromosome"/>
</dbReference>
<dbReference type="GO" id="GO:0003677">
    <property type="term" value="F:DNA binding"/>
    <property type="evidence" value="ECO:0007669"/>
    <property type="project" value="UniProtKB-UniRule"/>
</dbReference>
<dbReference type="GO" id="GO:0004252">
    <property type="term" value="F:serine-type endopeptidase activity"/>
    <property type="evidence" value="ECO:0007669"/>
    <property type="project" value="UniProtKB-UniRule"/>
</dbReference>
<dbReference type="GO" id="GO:0006281">
    <property type="term" value="P:DNA repair"/>
    <property type="evidence" value="ECO:0007669"/>
    <property type="project" value="UniProtKB-UniRule"/>
</dbReference>
<dbReference type="GO" id="GO:0006260">
    <property type="term" value="P:DNA replication"/>
    <property type="evidence" value="ECO:0007669"/>
    <property type="project" value="UniProtKB-UniRule"/>
</dbReference>
<dbReference type="GO" id="GO:0045892">
    <property type="term" value="P:negative regulation of DNA-templated transcription"/>
    <property type="evidence" value="ECO:0007669"/>
    <property type="project" value="UniProtKB-UniRule"/>
</dbReference>
<dbReference type="GO" id="GO:0006508">
    <property type="term" value="P:proteolysis"/>
    <property type="evidence" value="ECO:0007669"/>
    <property type="project" value="InterPro"/>
</dbReference>
<dbReference type="GO" id="GO:0009432">
    <property type="term" value="P:SOS response"/>
    <property type="evidence" value="ECO:0007669"/>
    <property type="project" value="UniProtKB-UniRule"/>
</dbReference>
<dbReference type="CDD" id="cd06529">
    <property type="entry name" value="S24_LexA-like"/>
    <property type="match status" value="1"/>
</dbReference>
<dbReference type="FunFam" id="1.10.10.10:FF:000009">
    <property type="entry name" value="LexA repressor"/>
    <property type="match status" value="1"/>
</dbReference>
<dbReference type="FunFam" id="2.10.109.10:FF:000001">
    <property type="entry name" value="LexA repressor"/>
    <property type="match status" value="1"/>
</dbReference>
<dbReference type="Gene3D" id="2.10.109.10">
    <property type="entry name" value="Umud Fragment, subunit A"/>
    <property type="match status" value="1"/>
</dbReference>
<dbReference type="Gene3D" id="1.10.10.10">
    <property type="entry name" value="Winged helix-like DNA-binding domain superfamily/Winged helix DNA-binding domain"/>
    <property type="match status" value="1"/>
</dbReference>
<dbReference type="HAMAP" id="MF_00015">
    <property type="entry name" value="LexA"/>
    <property type="match status" value="1"/>
</dbReference>
<dbReference type="InterPro" id="IPR006200">
    <property type="entry name" value="LexA"/>
</dbReference>
<dbReference type="InterPro" id="IPR039418">
    <property type="entry name" value="LexA-like"/>
</dbReference>
<dbReference type="InterPro" id="IPR036286">
    <property type="entry name" value="LexA/Signal_pep-like_sf"/>
</dbReference>
<dbReference type="InterPro" id="IPR006199">
    <property type="entry name" value="LexA_DNA-bd_dom"/>
</dbReference>
<dbReference type="InterPro" id="IPR050077">
    <property type="entry name" value="LexA_repressor"/>
</dbReference>
<dbReference type="InterPro" id="IPR006197">
    <property type="entry name" value="Peptidase_S24_LexA"/>
</dbReference>
<dbReference type="InterPro" id="IPR015927">
    <property type="entry name" value="Peptidase_S24_S26A/B/C"/>
</dbReference>
<dbReference type="InterPro" id="IPR036388">
    <property type="entry name" value="WH-like_DNA-bd_sf"/>
</dbReference>
<dbReference type="InterPro" id="IPR036390">
    <property type="entry name" value="WH_DNA-bd_sf"/>
</dbReference>
<dbReference type="NCBIfam" id="TIGR00498">
    <property type="entry name" value="lexA"/>
    <property type="match status" value="1"/>
</dbReference>
<dbReference type="PANTHER" id="PTHR33516">
    <property type="entry name" value="LEXA REPRESSOR"/>
    <property type="match status" value="1"/>
</dbReference>
<dbReference type="PANTHER" id="PTHR33516:SF2">
    <property type="entry name" value="LEXA REPRESSOR-RELATED"/>
    <property type="match status" value="1"/>
</dbReference>
<dbReference type="Pfam" id="PF01726">
    <property type="entry name" value="LexA_DNA_bind"/>
    <property type="match status" value="1"/>
</dbReference>
<dbReference type="Pfam" id="PF00717">
    <property type="entry name" value="Peptidase_S24"/>
    <property type="match status" value="1"/>
</dbReference>
<dbReference type="PRINTS" id="PR00726">
    <property type="entry name" value="LEXASERPTASE"/>
</dbReference>
<dbReference type="SUPFAM" id="SSF51306">
    <property type="entry name" value="LexA/Signal peptidase"/>
    <property type="match status" value="1"/>
</dbReference>
<dbReference type="SUPFAM" id="SSF46785">
    <property type="entry name" value="Winged helix' DNA-binding domain"/>
    <property type="match status" value="1"/>
</dbReference>